<name>SELD_YERPS</name>
<organism>
    <name type="scientific">Yersinia pseudotuberculosis serotype I (strain IP32953)</name>
    <dbReference type="NCBI Taxonomy" id="273123"/>
    <lineage>
        <taxon>Bacteria</taxon>
        <taxon>Pseudomonadati</taxon>
        <taxon>Pseudomonadota</taxon>
        <taxon>Gammaproteobacteria</taxon>
        <taxon>Enterobacterales</taxon>
        <taxon>Yersiniaceae</taxon>
        <taxon>Yersinia</taxon>
    </lineage>
</organism>
<protein>
    <recommendedName>
        <fullName evidence="1">Selenide, water dikinase</fullName>
        <ecNumber evidence="1">2.7.9.3</ecNumber>
    </recommendedName>
    <alternativeName>
        <fullName evidence="1">Selenium donor protein</fullName>
    </alternativeName>
    <alternativeName>
        <fullName evidence="1">Selenophosphate synthase</fullName>
    </alternativeName>
</protein>
<proteinExistence type="inferred from homology"/>
<accession>Q66AP0</accession>
<feature type="chain" id="PRO_0000127644" description="Selenide, water dikinase">
    <location>
        <begin position="1"/>
        <end position="348"/>
    </location>
</feature>
<feature type="active site" evidence="1">
    <location>
        <position position="17"/>
    </location>
</feature>
<feature type="binding site" description="in other chain" evidence="1">
    <location>
        <position position="20"/>
    </location>
    <ligand>
        <name>ATP</name>
        <dbReference type="ChEBI" id="CHEBI:30616"/>
        <note>ligand shared between dimeric partners</note>
    </ligand>
</feature>
<feature type="binding site" description="in other chain" evidence="1">
    <location>
        <begin position="48"/>
        <end position="50"/>
    </location>
    <ligand>
        <name>ATP</name>
        <dbReference type="ChEBI" id="CHEBI:30616"/>
        <note>ligand shared between dimeric partners</note>
    </ligand>
</feature>
<feature type="binding site" evidence="1">
    <location>
        <position position="51"/>
    </location>
    <ligand>
        <name>Mg(2+)</name>
        <dbReference type="ChEBI" id="CHEBI:18420"/>
    </ligand>
</feature>
<feature type="binding site" description="in other chain" evidence="1">
    <location>
        <position position="68"/>
    </location>
    <ligand>
        <name>ATP</name>
        <dbReference type="ChEBI" id="CHEBI:30616"/>
        <note>ligand shared between dimeric partners</note>
    </ligand>
</feature>
<feature type="binding site" description="in other chain" evidence="1">
    <location>
        <position position="91"/>
    </location>
    <ligand>
        <name>ATP</name>
        <dbReference type="ChEBI" id="CHEBI:30616"/>
        <note>ligand shared between dimeric partners</note>
    </ligand>
</feature>
<feature type="binding site" evidence="1">
    <location>
        <position position="91"/>
    </location>
    <ligand>
        <name>Mg(2+)</name>
        <dbReference type="ChEBI" id="CHEBI:18420"/>
    </ligand>
</feature>
<feature type="binding site" evidence="1">
    <location>
        <begin position="139"/>
        <end position="141"/>
    </location>
    <ligand>
        <name>ATP</name>
        <dbReference type="ChEBI" id="CHEBI:30616"/>
        <note>ligand shared between dimeric partners</note>
    </ligand>
</feature>
<feature type="binding site" evidence="1">
    <location>
        <position position="227"/>
    </location>
    <ligand>
        <name>Mg(2+)</name>
        <dbReference type="ChEBI" id="CHEBI:18420"/>
    </ligand>
</feature>
<feature type="site" description="Important for catalytic activity" evidence="1">
    <location>
        <position position="20"/>
    </location>
</feature>
<keyword id="KW-0067">ATP-binding</keyword>
<keyword id="KW-0418">Kinase</keyword>
<keyword id="KW-0460">Magnesium</keyword>
<keyword id="KW-0479">Metal-binding</keyword>
<keyword id="KW-0547">Nucleotide-binding</keyword>
<keyword id="KW-0711">Selenium</keyword>
<keyword id="KW-0808">Transferase</keyword>
<dbReference type="EC" id="2.7.9.3" evidence="1"/>
<dbReference type="EMBL" id="BX936398">
    <property type="protein sequence ID" value="CAH21328.1"/>
    <property type="molecule type" value="Genomic_DNA"/>
</dbReference>
<dbReference type="RefSeq" id="WP_011192432.1">
    <property type="nucleotide sequence ID" value="NC_006155.1"/>
</dbReference>
<dbReference type="SMR" id="Q66AP0"/>
<dbReference type="KEGG" id="ypo:BZ17_374"/>
<dbReference type="KEGG" id="yps:YPTB2090"/>
<dbReference type="PATRIC" id="fig|273123.14.peg.400"/>
<dbReference type="Proteomes" id="UP000001011">
    <property type="component" value="Chromosome"/>
</dbReference>
<dbReference type="GO" id="GO:0005737">
    <property type="term" value="C:cytoplasm"/>
    <property type="evidence" value="ECO:0007669"/>
    <property type="project" value="TreeGrafter"/>
</dbReference>
<dbReference type="GO" id="GO:0005524">
    <property type="term" value="F:ATP binding"/>
    <property type="evidence" value="ECO:0007669"/>
    <property type="project" value="UniProtKB-UniRule"/>
</dbReference>
<dbReference type="GO" id="GO:0000287">
    <property type="term" value="F:magnesium ion binding"/>
    <property type="evidence" value="ECO:0007669"/>
    <property type="project" value="UniProtKB-UniRule"/>
</dbReference>
<dbReference type="GO" id="GO:0004756">
    <property type="term" value="F:selenide, water dikinase activity"/>
    <property type="evidence" value="ECO:0007669"/>
    <property type="project" value="UniProtKB-UniRule"/>
</dbReference>
<dbReference type="GO" id="GO:0016260">
    <property type="term" value="P:selenocysteine biosynthetic process"/>
    <property type="evidence" value="ECO:0007669"/>
    <property type="project" value="InterPro"/>
</dbReference>
<dbReference type="CDD" id="cd02195">
    <property type="entry name" value="SelD"/>
    <property type="match status" value="1"/>
</dbReference>
<dbReference type="FunFam" id="3.30.1330.10:FF:000003">
    <property type="entry name" value="Selenide, water dikinase"/>
    <property type="match status" value="1"/>
</dbReference>
<dbReference type="FunFam" id="3.90.650.10:FF:000004">
    <property type="entry name" value="Selenide, water dikinase"/>
    <property type="match status" value="1"/>
</dbReference>
<dbReference type="Gene3D" id="3.90.650.10">
    <property type="entry name" value="PurM-like C-terminal domain"/>
    <property type="match status" value="1"/>
</dbReference>
<dbReference type="Gene3D" id="3.30.1330.10">
    <property type="entry name" value="PurM-like, N-terminal domain"/>
    <property type="match status" value="1"/>
</dbReference>
<dbReference type="HAMAP" id="MF_00625">
    <property type="entry name" value="SelD"/>
    <property type="match status" value="1"/>
</dbReference>
<dbReference type="InterPro" id="IPR010918">
    <property type="entry name" value="PurM-like_C_dom"/>
</dbReference>
<dbReference type="InterPro" id="IPR036676">
    <property type="entry name" value="PurM-like_C_sf"/>
</dbReference>
<dbReference type="InterPro" id="IPR016188">
    <property type="entry name" value="PurM-like_N"/>
</dbReference>
<dbReference type="InterPro" id="IPR036921">
    <property type="entry name" value="PurM-like_N_sf"/>
</dbReference>
<dbReference type="InterPro" id="IPR023061">
    <property type="entry name" value="SelD_I"/>
</dbReference>
<dbReference type="InterPro" id="IPR004536">
    <property type="entry name" value="SPS/SelD"/>
</dbReference>
<dbReference type="NCBIfam" id="NF002098">
    <property type="entry name" value="PRK00943.1"/>
    <property type="match status" value="1"/>
</dbReference>
<dbReference type="NCBIfam" id="TIGR00476">
    <property type="entry name" value="selD"/>
    <property type="match status" value="1"/>
</dbReference>
<dbReference type="PANTHER" id="PTHR10256:SF0">
    <property type="entry name" value="INACTIVE SELENIDE, WATER DIKINASE-LIKE PROTEIN-RELATED"/>
    <property type="match status" value="1"/>
</dbReference>
<dbReference type="PANTHER" id="PTHR10256">
    <property type="entry name" value="SELENIDE, WATER DIKINASE"/>
    <property type="match status" value="1"/>
</dbReference>
<dbReference type="Pfam" id="PF00586">
    <property type="entry name" value="AIRS"/>
    <property type="match status" value="1"/>
</dbReference>
<dbReference type="Pfam" id="PF02769">
    <property type="entry name" value="AIRS_C"/>
    <property type="match status" value="1"/>
</dbReference>
<dbReference type="PIRSF" id="PIRSF036407">
    <property type="entry name" value="Selenphspht_syn"/>
    <property type="match status" value="1"/>
</dbReference>
<dbReference type="SUPFAM" id="SSF56042">
    <property type="entry name" value="PurM C-terminal domain-like"/>
    <property type="match status" value="1"/>
</dbReference>
<dbReference type="SUPFAM" id="SSF55326">
    <property type="entry name" value="PurM N-terminal domain-like"/>
    <property type="match status" value="1"/>
</dbReference>
<comment type="function">
    <text evidence="1">Synthesizes selenophosphate from selenide and ATP.</text>
</comment>
<comment type="catalytic activity">
    <reaction evidence="1">
        <text>hydrogenselenide + ATP + H2O = selenophosphate + AMP + phosphate + 2 H(+)</text>
        <dbReference type="Rhea" id="RHEA:18737"/>
        <dbReference type="ChEBI" id="CHEBI:15377"/>
        <dbReference type="ChEBI" id="CHEBI:15378"/>
        <dbReference type="ChEBI" id="CHEBI:16144"/>
        <dbReference type="ChEBI" id="CHEBI:29317"/>
        <dbReference type="ChEBI" id="CHEBI:30616"/>
        <dbReference type="ChEBI" id="CHEBI:43474"/>
        <dbReference type="ChEBI" id="CHEBI:456215"/>
        <dbReference type="EC" id="2.7.9.3"/>
    </reaction>
</comment>
<comment type="cofactor">
    <cofactor evidence="1">
        <name>Mg(2+)</name>
        <dbReference type="ChEBI" id="CHEBI:18420"/>
    </cofactor>
    <text evidence="1">Binds 1 Mg(2+) ion per monomer.</text>
</comment>
<comment type="subunit">
    <text evidence="1">Homodimer.</text>
</comment>
<comment type="similarity">
    <text evidence="1">Belongs to the selenophosphate synthase 1 family. Class I subfamily.</text>
</comment>
<gene>
    <name evidence="1" type="primary">selD</name>
    <name type="ordered locus">YPTB2090</name>
</gene>
<sequence>MASPAIRLTQYSHGAGCGCKISPKVLDKILHTEQQKFFDPRLLVGNETRDDAAVYDIGNGVGIISTTDFFMPIVDDPFDFGRIAATNAISDVYAMGGKPIMAIAILGWPIDKLAPEIAQQVIEGGRYVCQQAGISLAGGHSIDAPEPIFGLAVTGIVSTEQVKKNSAAKPGCKLFLTKPLGIGILTTAEKKSKLRPEHRGLATETMCQLNKPGADFAHIPGVTAMTDVTGFGLLGHLSEICQGSGVQAILHYSAIPRLPAVEDYIAEGCVPGGTGRNFDSYGHLIGNMSDLQRQLLCDPQTSGGLLLAVLPDAEADVQAIAAQHGMTLSPIGELTSADSRRALIEIVV</sequence>
<reference key="1">
    <citation type="journal article" date="2004" name="Proc. Natl. Acad. Sci. U.S.A.">
        <title>Insights into the evolution of Yersinia pestis through whole-genome comparison with Yersinia pseudotuberculosis.</title>
        <authorList>
            <person name="Chain P.S.G."/>
            <person name="Carniel E."/>
            <person name="Larimer F.W."/>
            <person name="Lamerdin J."/>
            <person name="Stoutland P.O."/>
            <person name="Regala W.M."/>
            <person name="Georgescu A.M."/>
            <person name="Vergez L.M."/>
            <person name="Land M.L."/>
            <person name="Motin V.L."/>
            <person name="Brubaker R.R."/>
            <person name="Fowler J."/>
            <person name="Hinnebusch J."/>
            <person name="Marceau M."/>
            <person name="Medigue C."/>
            <person name="Simonet M."/>
            <person name="Chenal-Francisque V."/>
            <person name="Souza B."/>
            <person name="Dacheux D."/>
            <person name="Elliott J.M."/>
            <person name="Derbise A."/>
            <person name="Hauser L.J."/>
            <person name="Garcia E."/>
        </authorList>
    </citation>
    <scope>NUCLEOTIDE SEQUENCE [LARGE SCALE GENOMIC DNA]</scope>
    <source>
        <strain>IP32953</strain>
    </source>
</reference>
<evidence type="ECO:0000255" key="1">
    <source>
        <dbReference type="HAMAP-Rule" id="MF_00625"/>
    </source>
</evidence>